<protein>
    <recommendedName>
        <fullName>Hemoglobin subunit beta</fullName>
    </recommendedName>
    <alternativeName>
        <fullName>Beta-globin</fullName>
    </alternativeName>
    <alternativeName>
        <fullName>Hemoglobin beta chain</fullName>
    </alternativeName>
</protein>
<sequence length="148" mass="16111">MVDWTDAERSAIVGLWGKISVDEIGPQALARLLIVSPWTQRHFSTFGNLSTPAAIMGNPAVAKHGKTVMHGLDRAVQNLDDIKNTYAALSVMHSEKLHVDPDNFRLLADCITVCVAAKLGPAVFNADTQEAFQKFLAVVVSALGRQYH</sequence>
<feature type="initiator methionine" description="Removed" evidence="1">
    <location>
        <position position="1"/>
    </location>
</feature>
<feature type="chain" id="PRO_0000053040" description="Hemoglobin subunit beta">
    <location>
        <begin position="2"/>
        <end position="148"/>
    </location>
</feature>
<feature type="domain" description="Globin" evidence="2">
    <location>
        <begin position="3"/>
        <end position="148"/>
    </location>
</feature>
<feature type="binding site" description="distal binding residue">
    <location>
        <position position="64"/>
    </location>
    <ligand>
        <name>heme b</name>
        <dbReference type="ChEBI" id="CHEBI:60344"/>
    </ligand>
    <ligandPart>
        <name>Fe</name>
        <dbReference type="ChEBI" id="CHEBI:18248"/>
    </ligandPart>
</feature>
<feature type="binding site" description="proximal binding residue">
    <location>
        <position position="93"/>
    </location>
    <ligand>
        <name>heme b</name>
        <dbReference type="ChEBI" id="CHEBI:60344"/>
    </ligand>
    <ligandPart>
        <name>Fe</name>
        <dbReference type="ChEBI" id="CHEBI:18248"/>
    </ligandPart>
</feature>
<dbReference type="EMBL" id="AY026061">
    <property type="protein sequence ID" value="AAK11716.1"/>
    <property type="molecule type" value="mRNA"/>
</dbReference>
<dbReference type="PIR" id="E60505">
    <property type="entry name" value="E60505"/>
</dbReference>
<dbReference type="SMR" id="Q98TS0"/>
<dbReference type="GO" id="GO:0072562">
    <property type="term" value="C:blood microparticle"/>
    <property type="evidence" value="ECO:0007669"/>
    <property type="project" value="TreeGrafter"/>
</dbReference>
<dbReference type="GO" id="GO:0031838">
    <property type="term" value="C:haptoglobin-hemoglobin complex"/>
    <property type="evidence" value="ECO:0007669"/>
    <property type="project" value="TreeGrafter"/>
</dbReference>
<dbReference type="GO" id="GO:0005833">
    <property type="term" value="C:hemoglobin complex"/>
    <property type="evidence" value="ECO:0007669"/>
    <property type="project" value="InterPro"/>
</dbReference>
<dbReference type="GO" id="GO:0031720">
    <property type="term" value="F:haptoglobin binding"/>
    <property type="evidence" value="ECO:0007669"/>
    <property type="project" value="TreeGrafter"/>
</dbReference>
<dbReference type="GO" id="GO:0020037">
    <property type="term" value="F:heme binding"/>
    <property type="evidence" value="ECO:0007669"/>
    <property type="project" value="InterPro"/>
</dbReference>
<dbReference type="GO" id="GO:0046872">
    <property type="term" value="F:metal ion binding"/>
    <property type="evidence" value="ECO:0007669"/>
    <property type="project" value="UniProtKB-KW"/>
</dbReference>
<dbReference type="GO" id="GO:0043177">
    <property type="term" value="F:organic acid binding"/>
    <property type="evidence" value="ECO:0007669"/>
    <property type="project" value="TreeGrafter"/>
</dbReference>
<dbReference type="GO" id="GO:0019825">
    <property type="term" value="F:oxygen binding"/>
    <property type="evidence" value="ECO:0007669"/>
    <property type="project" value="InterPro"/>
</dbReference>
<dbReference type="GO" id="GO:0005344">
    <property type="term" value="F:oxygen carrier activity"/>
    <property type="evidence" value="ECO:0007669"/>
    <property type="project" value="UniProtKB-KW"/>
</dbReference>
<dbReference type="GO" id="GO:0004601">
    <property type="term" value="F:peroxidase activity"/>
    <property type="evidence" value="ECO:0007669"/>
    <property type="project" value="TreeGrafter"/>
</dbReference>
<dbReference type="GO" id="GO:0042744">
    <property type="term" value="P:hydrogen peroxide catabolic process"/>
    <property type="evidence" value="ECO:0007669"/>
    <property type="project" value="TreeGrafter"/>
</dbReference>
<dbReference type="CDD" id="cd08925">
    <property type="entry name" value="Hb-beta-like"/>
    <property type="match status" value="1"/>
</dbReference>
<dbReference type="FunFam" id="1.10.490.10:FF:000001">
    <property type="entry name" value="Hemoglobin subunit beta"/>
    <property type="match status" value="1"/>
</dbReference>
<dbReference type="Gene3D" id="1.10.490.10">
    <property type="entry name" value="Globins"/>
    <property type="match status" value="1"/>
</dbReference>
<dbReference type="InterPro" id="IPR000971">
    <property type="entry name" value="Globin"/>
</dbReference>
<dbReference type="InterPro" id="IPR009050">
    <property type="entry name" value="Globin-like_sf"/>
</dbReference>
<dbReference type="InterPro" id="IPR012292">
    <property type="entry name" value="Globin/Proto"/>
</dbReference>
<dbReference type="InterPro" id="IPR002337">
    <property type="entry name" value="Hemoglobin_b"/>
</dbReference>
<dbReference type="InterPro" id="IPR050056">
    <property type="entry name" value="Hemoglobin_oxygen_transport"/>
</dbReference>
<dbReference type="PANTHER" id="PTHR11442">
    <property type="entry name" value="HEMOGLOBIN FAMILY MEMBER"/>
    <property type="match status" value="1"/>
</dbReference>
<dbReference type="PANTHER" id="PTHR11442:SF102">
    <property type="entry name" value="HEMOGLOBIN SUBUNIT BETA-1-RELATED"/>
    <property type="match status" value="1"/>
</dbReference>
<dbReference type="Pfam" id="PF00042">
    <property type="entry name" value="Globin"/>
    <property type="match status" value="1"/>
</dbReference>
<dbReference type="PRINTS" id="PR00814">
    <property type="entry name" value="BETAHAEM"/>
</dbReference>
<dbReference type="SUPFAM" id="SSF46458">
    <property type="entry name" value="Globin-like"/>
    <property type="match status" value="1"/>
</dbReference>
<dbReference type="PROSITE" id="PS01033">
    <property type="entry name" value="GLOBIN"/>
    <property type="match status" value="1"/>
</dbReference>
<organism>
    <name type="scientific">Oncorhynchus nerka</name>
    <name type="common">Sockeye salmon</name>
    <name type="synonym">Salmo nerka</name>
    <dbReference type="NCBI Taxonomy" id="8023"/>
    <lineage>
        <taxon>Eukaryota</taxon>
        <taxon>Metazoa</taxon>
        <taxon>Chordata</taxon>
        <taxon>Craniata</taxon>
        <taxon>Vertebrata</taxon>
        <taxon>Euteleostomi</taxon>
        <taxon>Actinopterygii</taxon>
        <taxon>Neopterygii</taxon>
        <taxon>Teleostei</taxon>
        <taxon>Protacanthopterygii</taxon>
        <taxon>Salmoniformes</taxon>
        <taxon>Salmonidae</taxon>
        <taxon>Salmoninae</taxon>
        <taxon>Oncorhynchus</taxon>
    </lineage>
</organism>
<keyword id="KW-0349">Heme</keyword>
<keyword id="KW-0408">Iron</keyword>
<keyword id="KW-0479">Metal-binding</keyword>
<keyword id="KW-0561">Oxygen transport</keyword>
<keyword id="KW-0813">Transport</keyword>
<name>HBB_ONCNE</name>
<gene>
    <name type="primary">hbb</name>
</gene>
<accession>Q98TS0</accession>
<proteinExistence type="evidence at transcript level"/>
<comment type="function">
    <text>Involved in oxygen transport from gills to the various peripheral tissues.</text>
</comment>
<comment type="subunit">
    <text>Heterotetramer of two alpha chains and two beta chains.</text>
</comment>
<comment type="tissue specificity">
    <text>Red blood cells.</text>
</comment>
<comment type="similarity">
    <text evidence="2">Belongs to the globin family.</text>
</comment>
<evidence type="ECO:0000250" key="1"/>
<evidence type="ECO:0000255" key="2">
    <source>
        <dbReference type="PROSITE-ProRule" id="PRU00238"/>
    </source>
</evidence>
<reference key="1">
    <citation type="submission" date="2001-01" db="EMBL/GenBank/DDBJ databases">
        <title>Three sockeye salmon cDNA sequences (ferritin H, alpha tubulin and beta globin subunits) isolated from brain are members of multigene families.</title>
        <authorList>
            <person name="Krueckl S.L."/>
            <person name="Sherwood N.M."/>
        </authorList>
    </citation>
    <scope>NUCLEOTIDE SEQUENCE [MRNA]</scope>
</reference>